<proteinExistence type="inferred from homology"/>
<sequence length="133" mass="14064">MNAPVWWQQLLLAMTGGALGSGLRFAIGASLIQRFGTGFPWGTLTVNLLGSFVAGVLLVWLDARGPSSWPLRALLIVGVIGGLTTFSSLMMECLVFARTDRSTMIGIYLAVTLLAGLALVVAGARTGQWLVAR</sequence>
<name>FLUC_XANE5</name>
<keyword id="KW-0997">Cell inner membrane</keyword>
<keyword id="KW-1003">Cell membrane</keyword>
<keyword id="KW-0407">Ion channel</keyword>
<keyword id="KW-0406">Ion transport</keyword>
<keyword id="KW-0472">Membrane</keyword>
<keyword id="KW-0479">Metal-binding</keyword>
<keyword id="KW-0915">Sodium</keyword>
<keyword id="KW-0812">Transmembrane</keyword>
<keyword id="KW-1133">Transmembrane helix</keyword>
<keyword id="KW-0813">Transport</keyword>
<dbReference type="EMBL" id="AM039952">
    <property type="protein sequence ID" value="CAJ23738.1"/>
    <property type="molecule type" value="Genomic_DNA"/>
</dbReference>
<dbReference type="RefSeq" id="WP_008575332.1">
    <property type="nucleotide sequence ID" value="NZ_CP017190.1"/>
</dbReference>
<dbReference type="SMR" id="Q3BTX1"/>
<dbReference type="STRING" id="456327.BJD11_12120"/>
<dbReference type="GeneID" id="97510379"/>
<dbReference type="KEGG" id="xcv:XCV2061"/>
<dbReference type="eggNOG" id="COG0239">
    <property type="taxonomic scope" value="Bacteria"/>
</dbReference>
<dbReference type="HOGENOM" id="CLU_114342_2_3_6"/>
<dbReference type="Proteomes" id="UP000007069">
    <property type="component" value="Chromosome"/>
</dbReference>
<dbReference type="GO" id="GO:0005886">
    <property type="term" value="C:plasma membrane"/>
    <property type="evidence" value="ECO:0007669"/>
    <property type="project" value="UniProtKB-SubCell"/>
</dbReference>
<dbReference type="GO" id="GO:0062054">
    <property type="term" value="F:fluoride channel activity"/>
    <property type="evidence" value="ECO:0007669"/>
    <property type="project" value="UniProtKB-UniRule"/>
</dbReference>
<dbReference type="GO" id="GO:0046872">
    <property type="term" value="F:metal ion binding"/>
    <property type="evidence" value="ECO:0007669"/>
    <property type="project" value="UniProtKB-KW"/>
</dbReference>
<dbReference type="GO" id="GO:0140114">
    <property type="term" value="P:cellular detoxification of fluoride"/>
    <property type="evidence" value="ECO:0007669"/>
    <property type="project" value="UniProtKB-UniRule"/>
</dbReference>
<dbReference type="HAMAP" id="MF_00454">
    <property type="entry name" value="FluC"/>
    <property type="match status" value="1"/>
</dbReference>
<dbReference type="InterPro" id="IPR003691">
    <property type="entry name" value="FluC"/>
</dbReference>
<dbReference type="NCBIfam" id="NF010814">
    <property type="entry name" value="PRK14218.1"/>
    <property type="match status" value="1"/>
</dbReference>
<dbReference type="PANTHER" id="PTHR28259">
    <property type="entry name" value="FLUORIDE EXPORT PROTEIN 1-RELATED"/>
    <property type="match status" value="1"/>
</dbReference>
<dbReference type="PANTHER" id="PTHR28259:SF1">
    <property type="entry name" value="FLUORIDE EXPORT PROTEIN 1-RELATED"/>
    <property type="match status" value="1"/>
</dbReference>
<dbReference type="Pfam" id="PF02537">
    <property type="entry name" value="CRCB"/>
    <property type="match status" value="1"/>
</dbReference>
<gene>
    <name evidence="1" type="primary">fluC</name>
    <name evidence="1" type="synonym">crcB</name>
    <name type="ordered locus">XCV2061</name>
</gene>
<organism>
    <name type="scientific">Xanthomonas euvesicatoria pv. vesicatoria (strain 85-10)</name>
    <name type="common">Xanthomonas campestris pv. vesicatoria</name>
    <dbReference type="NCBI Taxonomy" id="316273"/>
    <lineage>
        <taxon>Bacteria</taxon>
        <taxon>Pseudomonadati</taxon>
        <taxon>Pseudomonadota</taxon>
        <taxon>Gammaproteobacteria</taxon>
        <taxon>Lysobacterales</taxon>
        <taxon>Lysobacteraceae</taxon>
        <taxon>Xanthomonas</taxon>
    </lineage>
</organism>
<feature type="chain" id="PRO_0000252960" description="Fluoride-specific ion channel FluC">
    <location>
        <begin position="1"/>
        <end position="133"/>
    </location>
</feature>
<feature type="transmembrane region" description="Helical" evidence="1">
    <location>
        <begin position="12"/>
        <end position="32"/>
    </location>
</feature>
<feature type="transmembrane region" description="Helical" evidence="1">
    <location>
        <begin position="41"/>
        <end position="61"/>
    </location>
</feature>
<feature type="transmembrane region" description="Helical" evidence="1">
    <location>
        <begin position="76"/>
        <end position="96"/>
    </location>
</feature>
<feature type="transmembrane region" description="Helical" evidence="1">
    <location>
        <begin position="104"/>
        <end position="124"/>
    </location>
</feature>
<feature type="binding site" evidence="1">
    <location>
        <position position="81"/>
    </location>
    <ligand>
        <name>Na(+)</name>
        <dbReference type="ChEBI" id="CHEBI:29101"/>
        <note>structural</note>
    </ligand>
</feature>
<feature type="binding site" evidence="1">
    <location>
        <position position="84"/>
    </location>
    <ligand>
        <name>Na(+)</name>
        <dbReference type="ChEBI" id="CHEBI:29101"/>
        <note>structural</note>
    </ligand>
</feature>
<reference key="1">
    <citation type="journal article" date="2005" name="J. Bacteriol.">
        <title>Insights into genome plasticity and pathogenicity of the plant pathogenic Bacterium Xanthomonas campestris pv. vesicatoria revealed by the complete genome sequence.</title>
        <authorList>
            <person name="Thieme F."/>
            <person name="Koebnik R."/>
            <person name="Bekel T."/>
            <person name="Berger C."/>
            <person name="Boch J."/>
            <person name="Buettner D."/>
            <person name="Caldana C."/>
            <person name="Gaigalat L."/>
            <person name="Goesmann A."/>
            <person name="Kay S."/>
            <person name="Kirchner O."/>
            <person name="Lanz C."/>
            <person name="Linke B."/>
            <person name="McHardy A.C."/>
            <person name="Meyer F."/>
            <person name="Mittenhuber G."/>
            <person name="Nies D.H."/>
            <person name="Niesbach-Kloesgen U."/>
            <person name="Patschkowski T."/>
            <person name="Rueckert C."/>
            <person name="Rupp O."/>
            <person name="Schneiker S."/>
            <person name="Schuster S.C."/>
            <person name="Vorhoelter F.J."/>
            <person name="Weber E."/>
            <person name="Puehler A."/>
            <person name="Bonas U."/>
            <person name="Bartels D."/>
            <person name="Kaiser O."/>
        </authorList>
    </citation>
    <scope>NUCLEOTIDE SEQUENCE [LARGE SCALE GENOMIC DNA]</scope>
    <source>
        <strain>85-10</strain>
    </source>
</reference>
<comment type="function">
    <text evidence="1">Fluoride-specific ion channel. Important for reducing fluoride concentration in the cell, thus reducing its toxicity.</text>
</comment>
<comment type="catalytic activity">
    <reaction evidence="1">
        <text>fluoride(in) = fluoride(out)</text>
        <dbReference type="Rhea" id="RHEA:76159"/>
        <dbReference type="ChEBI" id="CHEBI:17051"/>
    </reaction>
    <physiologicalReaction direction="left-to-right" evidence="1">
        <dbReference type="Rhea" id="RHEA:76160"/>
    </physiologicalReaction>
</comment>
<comment type="activity regulation">
    <text evidence="1">Na(+) is not transported, but it plays an essential structural role and its presence is essential for fluoride channel function.</text>
</comment>
<comment type="subcellular location">
    <subcellularLocation>
        <location evidence="1">Cell inner membrane</location>
        <topology evidence="1">Multi-pass membrane protein</topology>
    </subcellularLocation>
</comment>
<comment type="similarity">
    <text evidence="1">Belongs to the fluoride channel Fluc/FEX (TC 1.A.43) family.</text>
</comment>
<protein>
    <recommendedName>
        <fullName evidence="1">Fluoride-specific ion channel FluC</fullName>
    </recommendedName>
</protein>
<evidence type="ECO:0000255" key="1">
    <source>
        <dbReference type="HAMAP-Rule" id="MF_00454"/>
    </source>
</evidence>
<accession>Q3BTX1</accession>